<reference key="1">
    <citation type="submission" date="2004-02" db="EMBL/GenBank/DDBJ databases">
        <authorList>
            <consortium name="NIH - Zebrafish Gene Collection (ZGC) project"/>
        </authorList>
    </citation>
    <scope>NUCLEOTIDE SEQUENCE [LARGE SCALE MRNA]</scope>
    <source>
        <tissue>Embryo</tissue>
    </source>
</reference>
<reference key="2">
    <citation type="journal article" date="2008" name="J. Proteome Res.">
        <title>Online automated in vivo zebrafish phosphoproteomics: from large-scale analysis down to a single embryo.</title>
        <authorList>
            <person name="Lemeer S."/>
            <person name="Pinkse M.W.H."/>
            <person name="Mohammed S."/>
            <person name="van Breukelen B."/>
            <person name="den Hertog J."/>
            <person name="Slijper M."/>
            <person name="Heck A.J.R."/>
        </authorList>
    </citation>
    <scope>PHOSPHORYLATION [LARGE SCALE ANALYSIS] AT SER-162</scope>
    <scope>IDENTIFICATION BY MASS SPECTROMETRY</scope>
    <source>
        <tissue>Embryo</tissue>
    </source>
</reference>
<sequence>MSDEEKSETRNFFMGYDDLSDSSSDSESRSGPEATASSAPAEPQQSRKRAAEPLPRPDELFRSVSKPAFLYNPLNKAIDWDSRAVRAPEEPPKEFKVWKSSAVPPPQSYVTEENKKKAPAGMDMAIKWSNVYEDNGDDAPQAHRGPAHFLPEEEEEEQQPDSDDDSSSKLSKSAKKRRVETFQQKEKRKRDIGQATSDKNFVEEEKRILRQCLD</sequence>
<feature type="chain" id="PRO_0000359774" description="UPF0690 protein C1orf52 homolog">
    <location>
        <begin position="1"/>
        <end position="214"/>
    </location>
</feature>
<feature type="region of interest" description="Disordered" evidence="1">
    <location>
        <begin position="1"/>
        <end position="66"/>
    </location>
</feature>
<feature type="region of interest" description="Disordered" evidence="1">
    <location>
        <begin position="81"/>
        <end position="214"/>
    </location>
</feature>
<feature type="compositionally biased region" description="Low complexity" evidence="1">
    <location>
        <begin position="32"/>
        <end position="44"/>
    </location>
</feature>
<feature type="compositionally biased region" description="Basic and acidic residues" evidence="1">
    <location>
        <begin position="49"/>
        <end position="61"/>
    </location>
</feature>
<feature type="compositionally biased region" description="Basic and acidic residues" evidence="1">
    <location>
        <begin position="81"/>
        <end position="97"/>
    </location>
</feature>
<feature type="compositionally biased region" description="Acidic residues" evidence="1">
    <location>
        <begin position="152"/>
        <end position="165"/>
    </location>
</feature>
<feature type="compositionally biased region" description="Basic and acidic residues" evidence="1">
    <location>
        <begin position="179"/>
        <end position="192"/>
    </location>
</feature>
<feature type="compositionally biased region" description="Basic and acidic residues" evidence="1">
    <location>
        <begin position="200"/>
        <end position="214"/>
    </location>
</feature>
<feature type="modified residue" description="Phosphoserine" evidence="2">
    <location>
        <position position="162"/>
    </location>
</feature>
<evidence type="ECO:0000256" key="1">
    <source>
        <dbReference type="SAM" id="MobiDB-lite"/>
    </source>
</evidence>
<evidence type="ECO:0000269" key="2">
    <source>
    </source>
</evidence>
<evidence type="ECO:0000305" key="3"/>
<dbReference type="EMBL" id="BC056319">
    <property type="protein sequence ID" value="AAH56319.1"/>
    <property type="molecule type" value="mRNA"/>
</dbReference>
<dbReference type="EMBL" id="BC066398">
    <property type="protein sequence ID" value="AAH66398.1"/>
    <property type="molecule type" value="mRNA"/>
</dbReference>
<dbReference type="RefSeq" id="NP_956836.1">
    <property type="nucleotide sequence ID" value="NM_200542.2"/>
</dbReference>
<dbReference type="BioGRID" id="89649">
    <property type="interactions" value="1"/>
</dbReference>
<dbReference type="FunCoup" id="Q7SZP2">
    <property type="interactions" value="823"/>
</dbReference>
<dbReference type="iPTMnet" id="Q7SZP2"/>
<dbReference type="PaxDb" id="7955-ENSDARP00000101960"/>
<dbReference type="Ensembl" id="ENSDART00000158712">
    <property type="protein sequence ID" value="ENSDARP00000137913"/>
    <property type="gene ID" value="ENSDARG00000103134"/>
</dbReference>
<dbReference type="GeneID" id="393514"/>
<dbReference type="KEGG" id="dre:393514"/>
<dbReference type="AGR" id="ZFIN:ZDB-GENE-040426-1448"/>
<dbReference type="ZFIN" id="ZDB-GENE-040426-1448">
    <property type="gene designation" value="zgc:65873"/>
</dbReference>
<dbReference type="eggNOG" id="ENOG502QVJV">
    <property type="taxonomic scope" value="Eukaryota"/>
</dbReference>
<dbReference type="HOGENOM" id="CLU_127170_0_0_1"/>
<dbReference type="InParanoid" id="Q7SZP2"/>
<dbReference type="OMA" id="PERICEP"/>
<dbReference type="OrthoDB" id="1906229at2759"/>
<dbReference type="PhylomeDB" id="Q7SZP2"/>
<dbReference type="TreeFam" id="TF333299"/>
<dbReference type="PRO" id="PR:Q7SZP2"/>
<dbReference type="Proteomes" id="UP000000437">
    <property type="component" value="Chromosome 23"/>
</dbReference>
<dbReference type="Bgee" id="ENSDARG00000103134">
    <property type="expression patterns" value="Expressed in muscle tissue and 22 other cell types or tissues"/>
</dbReference>
<dbReference type="InterPro" id="IPR029089">
    <property type="entry name" value="DUF4660"/>
</dbReference>
<dbReference type="PANTHER" id="PTHR31833">
    <property type="entry name" value="UPF0690 PROTEIN C1ORF52"/>
    <property type="match status" value="1"/>
</dbReference>
<dbReference type="PANTHER" id="PTHR31833:SF2">
    <property type="entry name" value="UPF0690 PROTEIN C1ORF52"/>
    <property type="match status" value="1"/>
</dbReference>
<dbReference type="Pfam" id="PF15559">
    <property type="entry name" value="DUF4660"/>
    <property type="match status" value="1"/>
</dbReference>
<protein>
    <recommendedName>
        <fullName>UPF0690 protein C1orf52 homolog</fullName>
    </recommendedName>
</protein>
<gene>
    <name type="ORF">zgc:65873</name>
</gene>
<accession>Q7SZP2</accession>
<proteinExistence type="evidence at protein level"/>
<name>CA052_DANRE</name>
<organism>
    <name type="scientific">Danio rerio</name>
    <name type="common">Zebrafish</name>
    <name type="synonym">Brachydanio rerio</name>
    <dbReference type="NCBI Taxonomy" id="7955"/>
    <lineage>
        <taxon>Eukaryota</taxon>
        <taxon>Metazoa</taxon>
        <taxon>Chordata</taxon>
        <taxon>Craniata</taxon>
        <taxon>Vertebrata</taxon>
        <taxon>Euteleostomi</taxon>
        <taxon>Actinopterygii</taxon>
        <taxon>Neopterygii</taxon>
        <taxon>Teleostei</taxon>
        <taxon>Ostariophysi</taxon>
        <taxon>Cypriniformes</taxon>
        <taxon>Danionidae</taxon>
        <taxon>Danioninae</taxon>
        <taxon>Danio</taxon>
    </lineage>
</organism>
<keyword id="KW-0597">Phosphoprotein</keyword>
<keyword id="KW-1185">Reference proteome</keyword>
<comment type="similarity">
    <text evidence="3">Belongs to the UPF0690 family.</text>
</comment>